<proteinExistence type="evidence at protein level"/>
<sequence>MGALGRVLLWLQLCAMTRAAYKLWVPNTSFDTASNWNQNRTPCAGDAVQFPADKMVSVLVRDSHAISDMLLPLDGELVLASGAALSAAGGDSDPACNPGAPLLFRNPDRFSWLDPHLWSSGTQAPGLFSVDAERVPCSYDDVLFPRDGSFRVALGPGPNPVHVRSVSAVGQTFSRDEDLTAFLASREGRLRFHGSGALRVGSQACTDASGCVCGNAEMLPWICASLLQPLGGRCPQAACQDPLLPQGQCCDLCGAIVSLTHDPTFDLERYRARLLDLFLKQPQYQGLQVAVSKVLRDAHTEIQVVLVETEHATGAAGQLGHALLQDAVAQGSVLGIVSATLRQSGKPMTADSELNQSSSGAGLAGGVAALVLLALLGTVLLLLHRSGRLRWRRHEDAEPVSAGLPLGFRNPIFDAIVFKQQPSVELPDSAQKVDILDIDTKFGCFVNPLFAGEAEAEA</sequence>
<feature type="signal peptide" evidence="2">
    <location>
        <begin position="1"/>
        <end position="19"/>
    </location>
</feature>
<feature type="chain" id="PRO_0000020703" description="Protein amnionless">
    <location>
        <begin position="20"/>
        <end position="458"/>
    </location>
</feature>
<feature type="chain" id="PRO_0000447652" description="Soluble protein amnionless">
    <location>
        <begin position="20"/>
        <end status="unknown"/>
    </location>
</feature>
<feature type="topological domain" description="Extracellular" evidence="3">
    <location>
        <begin position="20"/>
        <end position="362"/>
    </location>
</feature>
<feature type="transmembrane region" description="Helical" evidence="3">
    <location>
        <begin position="363"/>
        <end position="383"/>
    </location>
</feature>
<feature type="topological domain" description="Cytoplasmic" evidence="3">
    <location>
        <begin position="384"/>
        <end position="458"/>
    </location>
</feature>
<feature type="domain" description="VWFC">
    <location>
        <begin position="203"/>
        <end position="254"/>
    </location>
</feature>
<feature type="region of interest" description="Interaction with CUBN" evidence="2">
    <location>
        <begin position="67"/>
        <end position="87"/>
    </location>
</feature>
<feature type="glycosylation site" description="N-linked (GlcNAc...) asparagine" evidence="3">
    <location>
        <position position="27"/>
    </location>
</feature>
<feature type="glycosylation site" description="N-linked (GlcNAc...) asparagine" evidence="3">
    <location>
        <position position="355"/>
    </location>
</feature>
<feature type="disulfide bond" evidence="2">
    <location>
        <begin position="43"/>
        <end position="96"/>
    </location>
</feature>
<feature type="disulfide bond" evidence="2">
    <location>
        <begin position="137"/>
        <end position="213"/>
    </location>
</feature>
<feature type="disulfide bond" evidence="2">
    <location>
        <begin position="205"/>
        <end position="211"/>
    </location>
</feature>
<feature type="disulfide bond" evidence="2">
    <location>
        <begin position="223"/>
        <end position="249"/>
    </location>
</feature>
<feature type="disulfide bond" evidence="2">
    <location>
        <begin position="234"/>
        <end position="250"/>
    </location>
</feature>
<feature type="disulfide bond" evidence="2">
    <location>
        <begin position="239"/>
        <end position="253"/>
    </location>
</feature>
<gene>
    <name type="primary">Amn</name>
</gene>
<protein>
    <recommendedName>
        <fullName>Protein amnionless</fullName>
    </recommendedName>
    <component>
        <recommendedName>
            <fullName>Soluble protein amnionless</fullName>
        </recommendedName>
    </component>
</protein>
<reference key="1">
    <citation type="journal article" date="2001" name="Nat. Genet.">
        <title>The amnionless gene, essential for mouse gastrulation, encodes a visceral-endoderm-specific protein with an extracellular cysteine-rich domain.</title>
        <authorList>
            <person name="Kalantry S."/>
            <person name="Manning S."/>
            <person name="Haub O."/>
            <person name="Tomihara-Newberger C."/>
            <person name="Lee H.-G."/>
            <person name="Fangman J."/>
            <person name="Disteche C.M."/>
            <person name="Manova K."/>
            <person name="Lacy E."/>
        </authorList>
    </citation>
    <scope>NUCLEOTIDE SEQUENCE [GENOMIC DNA / MRNA]</scope>
    <scope>DISRUPTION PHENOTYPE</scope>
    <scope>DEVELOPMENTAL STAGE</scope>
    <source>
        <strain>129/SvJ</strain>
        <strain>RIII</strain>
    </source>
</reference>
<reference key="2">
    <citation type="journal article" date="2004" name="Genome Res.">
        <title>The status, quality, and expansion of the NIH full-length cDNA project: the Mammalian Gene Collection (MGC).</title>
        <authorList>
            <consortium name="The MGC Project Team"/>
        </authorList>
    </citation>
    <scope>NUCLEOTIDE SEQUENCE [LARGE SCALE MRNA]</scope>
    <source>
        <tissue>Kidney</tissue>
    </source>
</reference>
<reference key="3">
    <citation type="journal article" date="1998" name="Dev. Biol.">
        <title>The amn gene product is required in extraembryonic tissues for the generation of middle primitive streak derivatives.</title>
        <authorList>
            <person name="Tomihara-Newberger C."/>
            <person name="Haub O."/>
            <person name="Lee H.-G."/>
            <person name="Soares V."/>
            <person name="Manova K."/>
            <person name="Lacy E."/>
        </authorList>
    </citation>
    <scope>DISRUPTION PHENOTYPE</scope>
</reference>
<reference key="4">
    <citation type="journal article" date="2004" name="Development">
        <title>Mouse amnionless, which is required for primitive streak assembly, mediates cell-surface localization and endocytic function of cubilin on visceral endoderm and kidney proximal tubules.</title>
        <authorList>
            <person name="Strope S."/>
            <person name="Rivi R."/>
            <person name="Metzger T."/>
            <person name="Manova K."/>
            <person name="Lacy E."/>
        </authorList>
    </citation>
    <scope>FUNCTION</scope>
    <scope>DISRUPTION PHENOTYPE</scope>
    <scope>INTERACTION WITH CUBN</scope>
    <scope>TISSUE SPECIFICITY</scope>
    <scope>SUBCELLULAR LOCATION</scope>
</reference>
<reference key="5">
    <citation type="journal article" date="2010" name="Cell">
        <title>A tissue-specific atlas of mouse protein phosphorylation and expression.</title>
        <authorList>
            <person name="Huttlin E.L."/>
            <person name="Jedrychowski M.P."/>
            <person name="Elias J.E."/>
            <person name="Goswami T."/>
            <person name="Rad R."/>
            <person name="Beausoleil S.A."/>
            <person name="Villen J."/>
            <person name="Haas W."/>
            <person name="Sowa M.E."/>
            <person name="Gygi S.P."/>
        </authorList>
    </citation>
    <scope>IDENTIFICATION BY MASS SPECTROMETRY [LARGE SCALE ANALYSIS]</scope>
    <source>
        <tissue>Kidney</tissue>
    </source>
</reference>
<accession>Q99JB7</accession>
<accession>Q5I0U1</accession>
<accession>Q99MP9</accession>
<keyword id="KW-1003">Cell membrane</keyword>
<keyword id="KW-0168">Coated pit</keyword>
<keyword id="KW-0217">Developmental protein</keyword>
<keyword id="KW-1015">Disulfide bond</keyword>
<keyword id="KW-0967">Endosome</keyword>
<keyword id="KW-0325">Glycoprotein</keyword>
<keyword id="KW-0472">Membrane</keyword>
<keyword id="KW-0653">Protein transport</keyword>
<keyword id="KW-1185">Reference proteome</keyword>
<keyword id="KW-0732">Signal</keyword>
<keyword id="KW-0812">Transmembrane</keyword>
<keyword id="KW-1133">Transmembrane helix</keyword>
<keyword id="KW-0813">Transport</keyword>
<evidence type="ECO:0000250" key="1">
    <source>
        <dbReference type="UniProtKB" id="F1SAM7"/>
    </source>
</evidence>
<evidence type="ECO:0000250" key="2">
    <source>
        <dbReference type="UniProtKB" id="Q9BXJ7"/>
    </source>
</evidence>
<evidence type="ECO:0000255" key="3"/>
<evidence type="ECO:0000269" key="4">
    <source>
    </source>
</evidence>
<evidence type="ECO:0000269" key="5">
    <source>
    </source>
</evidence>
<evidence type="ECO:0000269" key="6">
    <source>
    </source>
</evidence>
<evidence type="ECO:0000305" key="7"/>
<organism>
    <name type="scientific">Mus musculus</name>
    <name type="common">Mouse</name>
    <dbReference type="NCBI Taxonomy" id="10090"/>
    <lineage>
        <taxon>Eukaryota</taxon>
        <taxon>Metazoa</taxon>
        <taxon>Chordata</taxon>
        <taxon>Craniata</taxon>
        <taxon>Vertebrata</taxon>
        <taxon>Euteleostomi</taxon>
        <taxon>Mammalia</taxon>
        <taxon>Eutheria</taxon>
        <taxon>Euarchontoglires</taxon>
        <taxon>Glires</taxon>
        <taxon>Rodentia</taxon>
        <taxon>Myomorpha</taxon>
        <taxon>Muroidea</taxon>
        <taxon>Muridae</taxon>
        <taxon>Murinae</taxon>
        <taxon>Mus</taxon>
        <taxon>Mus</taxon>
    </lineage>
</organism>
<comment type="function">
    <text evidence="2 5">Membrane-bound component of the endocytic receptor formed by AMN and CUBN. Required for normal CUBN glycosylation and trafficking to the cell surface (PubMed:15342463). The complex formed by AMN and CUBN is required for efficient absorption of vitamin B12 (By similarity). Required for normal CUBN-mediated protein transport in the kidney (PubMed:15342463).</text>
</comment>
<comment type="subunit">
    <text evidence="2 5">Interacts (via extracellular region) with CUBN/cubilin (PubMed:15342463). This gives rise to a huge complex containing one AMN chain and three CUBN chains (By similarity).</text>
</comment>
<comment type="subcellular location">
    <subcellularLocation>
        <location evidence="5">Apical cell membrane</location>
        <topology evidence="2">Single-pass type I membrane protein</topology>
    </subcellularLocation>
    <subcellularLocation>
        <location evidence="2">Cell membrane</location>
        <topology evidence="2">Single-pass type I membrane protein</topology>
    </subcellularLocation>
    <subcellularLocation>
        <location evidence="2">Endosome membrane</location>
    </subcellularLocation>
    <subcellularLocation>
        <location evidence="2">Membrane</location>
        <location evidence="2">Coated pit</location>
    </subcellularLocation>
</comment>
<comment type="tissue specificity">
    <text evidence="5">Expressed in polarized epithelial cells which are specialized in resorption or transport, specifically kidney proximal tubules and intestinal epithelium.</text>
</comment>
<comment type="developmental stage">
    <text evidence="4">Detected in primitive endoderm at 4.5 dpc, and on the apical surface of the visceral endoderm from 5.5 dpc to 8.5 dpc. Expressed in mesonephric tubules at 11.5-12.5 dpc and in the metanephric kidney beginning at 14.5 dpc. Expressed in the intestine from 16.5 dpc.</text>
</comment>
<comment type="domain">
    <text evidence="1">The complex formed by AMN and CUBN is composed of a 400 Angstrom long stem and a globular crown region. The stem region is probably formed by AMN and the CUBN N-terminal region, including the EGF-like domains. The crown is probably formed by the CUBN CUB domains.</text>
</comment>
<comment type="PTM">
    <text evidence="2">N-glycosylated.</text>
</comment>
<comment type="PTM">
    <text evidence="2">A soluble form arises by proteolytic removal of the membrane anchor.</text>
</comment>
<comment type="disruption phenotype">
    <text evidence="4 5 6">Full embryonic lethality at about 10.5 dpc with failure of primitive middle streak assembly and absence of trunk mesoderm formation.</text>
</comment>
<comment type="miscellaneous">
    <text evidence="7">The role of Amn in embryonic development seems to be species specific. In mice, null mutations lead to embryonic lethality. Human mutations give rise to much milder symptoms.</text>
</comment>
<dbReference type="EMBL" id="AF320615">
    <property type="protein sequence ID" value="AAK37476.1"/>
    <property type="molecule type" value="Genomic_DNA"/>
</dbReference>
<dbReference type="EMBL" id="AF320616">
    <property type="protein sequence ID" value="AAK37477.1"/>
    <property type="molecule type" value="Genomic_DNA"/>
</dbReference>
<dbReference type="EMBL" id="AF320619">
    <property type="protein sequence ID" value="AAK37478.1"/>
    <property type="molecule type" value="mRNA"/>
</dbReference>
<dbReference type="EMBL" id="BC087954">
    <property type="protein sequence ID" value="AAH87954.1"/>
    <property type="molecule type" value="mRNA"/>
</dbReference>
<dbReference type="CCDS" id="CCDS36564.1"/>
<dbReference type="RefSeq" id="NP_291081.2">
    <property type="nucleotide sequence ID" value="NM_033603.3"/>
</dbReference>
<dbReference type="SMR" id="Q99JB7"/>
<dbReference type="ComplexPortal" id="CPX-5847">
    <property type="entry name" value="Cubam cobalamin uptake receptor complex"/>
</dbReference>
<dbReference type="FunCoup" id="Q99JB7">
    <property type="interactions" value="3"/>
</dbReference>
<dbReference type="STRING" id="10090.ENSMUSP00000021707"/>
<dbReference type="GlyCosmos" id="Q99JB7">
    <property type="glycosylation" value="2 sites, No reported glycans"/>
</dbReference>
<dbReference type="GlyGen" id="Q99JB7">
    <property type="glycosylation" value="2 sites"/>
</dbReference>
<dbReference type="iPTMnet" id="Q99JB7"/>
<dbReference type="PhosphoSitePlus" id="Q99JB7"/>
<dbReference type="jPOST" id="Q99JB7"/>
<dbReference type="PaxDb" id="10090-ENSMUSP00000021707"/>
<dbReference type="PeptideAtlas" id="Q99JB7"/>
<dbReference type="ProteomicsDB" id="296403"/>
<dbReference type="Antibodypedia" id="13">
    <property type="antibodies" value="51 antibodies from 21 providers"/>
</dbReference>
<dbReference type="DNASU" id="93835"/>
<dbReference type="Ensembl" id="ENSMUST00000021707.8">
    <property type="protein sequence ID" value="ENSMUSP00000021707.7"/>
    <property type="gene ID" value="ENSMUSG00000021278.8"/>
</dbReference>
<dbReference type="GeneID" id="93835"/>
<dbReference type="KEGG" id="mmu:93835"/>
<dbReference type="UCSC" id="uc007pcp.1">
    <property type="organism name" value="mouse"/>
</dbReference>
<dbReference type="AGR" id="MGI:1934943"/>
<dbReference type="CTD" id="81693"/>
<dbReference type="MGI" id="MGI:1934943">
    <property type="gene designation" value="Amn"/>
</dbReference>
<dbReference type="VEuPathDB" id="HostDB:ENSMUSG00000021278"/>
<dbReference type="eggNOG" id="ENOG502QUUQ">
    <property type="taxonomic scope" value="Eukaryota"/>
</dbReference>
<dbReference type="GeneTree" id="ENSGT00390000007463"/>
<dbReference type="HOGENOM" id="CLU_050471_0_0_1"/>
<dbReference type="InParanoid" id="Q99JB7"/>
<dbReference type="OMA" id="PDRFSWL"/>
<dbReference type="OrthoDB" id="10067964at2759"/>
<dbReference type="PhylomeDB" id="Q99JB7"/>
<dbReference type="TreeFam" id="TF323790"/>
<dbReference type="BioGRID-ORCS" id="93835">
    <property type="hits" value="0 hits in 80 CRISPR screens"/>
</dbReference>
<dbReference type="ChiTaRS" id="Amn">
    <property type="organism name" value="mouse"/>
</dbReference>
<dbReference type="PRO" id="PR:Q99JB7"/>
<dbReference type="Proteomes" id="UP000000589">
    <property type="component" value="Chromosome 12"/>
</dbReference>
<dbReference type="RNAct" id="Q99JB7">
    <property type="molecule type" value="protein"/>
</dbReference>
<dbReference type="Bgee" id="ENSMUSG00000021278">
    <property type="expression patterns" value="Expressed in intestinal villus and 77 other cell types or tissues"/>
</dbReference>
<dbReference type="GO" id="GO:0045177">
    <property type="term" value="C:apical part of cell"/>
    <property type="evidence" value="ECO:0000314"/>
    <property type="project" value="MGI"/>
</dbReference>
<dbReference type="GO" id="GO:0016324">
    <property type="term" value="C:apical plasma membrane"/>
    <property type="evidence" value="ECO:0000303"/>
    <property type="project" value="ComplexPortal"/>
</dbReference>
<dbReference type="GO" id="GO:0031526">
    <property type="term" value="C:brush border membrane"/>
    <property type="evidence" value="ECO:0007669"/>
    <property type="project" value="Ensembl"/>
</dbReference>
<dbReference type="GO" id="GO:0005905">
    <property type="term" value="C:clathrin-coated pit"/>
    <property type="evidence" value="ECO:0007669"/>
    <property type="project" value="UniProtKB-KW"/>
</dbReference>
<dbReference type="GO" id="GO:0030139">
    <property type="term" value="C:endocytic vesicle"/>
    <property type="evidence" value="ECO:0000266"/>
    <property type="project" value="ComplexPortal"/>
</dbReference>
<dbReference type="GO" id="GO:0010008">
    <property type="term" value="C:endosome membrane"/>
    <property type="evidence" value="ECO:0007669"/>
    <property type="project" value="UniProtKB-SubCell"/>
</dbReference>
<dbReference type="GO" id="GO:0005615">
    <property type="term" value="C:extracellular space"/>
    <property type="evidence" value="ECO:0007669"/>
    <property type="project" value="Ensembl"/>
</dbReference>
<dbReference type="GO" id="GO:0016020">
    <property type="term" value="C:membrane"/>
    <property type="evidence" value="ECO:0000266"/>
    <property type="project" value="ComplexPortal"/>
</dbReference>
<dbReference type="GO" id="GO:0031528">
    <property type="term" value="C:microvillus membrane"/>
    <property type="evidence" value="ECO:0007669"/>
    <property type="project" value="Ensembl"/>
</dbReference>
<dbReference type="GO" id="GO:0043235">
    <property type="term" value="C:receptor complex"/>
    <property type="evidence" value="ECO:0000266"/>
    <property type="project" value="ComplexPortal"/>
</dbReference>
<dbReference type="GO" id="GO:0038024">
    <property type="term" value="F:cargo receptor activity"/>
    <property type="evidence" value="ECO:0007669"/>
    <property type="project" value="Ensembl"/>
</dbReference>
<dbReference type="GO" id="GO:0005102">
    <property type="term" value="F:signaling receptor binding"/>
    <property type="evidence" value="ECO:0007669"/>
    <property type="project" value="Ensembl"/>
</dbReference>
<dbReference type="GO" id="GO:0009235">
    <property type="term" value="P:cobalamin metabolic process"/>
    <property type="evidence" value="ECO:0007669"/>
    <property type="project" value="Ensembl"/>
</dbReference>
<dbReference type="GO" id="GO:0015889">
    <property type="term" value="P:cobalamin transport"/>
    <property type="evidence" value="ECO:0000266"/>
    <property type="project" value="ComplexPortal"/>
</dbReference>
<dbReference type="GO" id="GO:0043001">
    <property type="term" value="P:Golgi to plasma membrane protein transport"/>
    <property type="evidence" value="ECO:0007669"/>
    <property type="project" value="Ensembl"/>
</dbReference>
<dbReference type="GO" id="GO:0008104">
    <property type="term" value="P:protein localization"/>
    <property type="evidence" value="ECO:0000315"/>
    <property type="project" value="MGI"/>
</dbReference>
<dbReference type="GO" id="GO:0006898">
    <property type="term" value="P:receptor-mediated endocytosis"/>
    <property type="evidence" value="ECO:0007669"/>
    <property type="project" value="Ensembl"/>
</dbReference>
<dbReference type="GO" id="GO:0097017">
    <property type="term" value="P:renal protein absorption"/>
    <property type="evidence" value="ECO:0000315"/>
    <property type="project" value="MGI"/>
</dbReference>
<dbReference type="InterPro" id="IPR026112">
    <property type="entry name" value="AMN"/>
</dbReference>
<dbReference type="PANTHER" id="PTHR14995">
    <property type="entry name" value="AMNIONLESS"/>
    <property type="match status" value="1"/>
</dbReference>
<dbReference type="PANTHER" id="PTHR14995:SF2">
    <property type="entry name" value="PROTEIN AMNIONLESS"/>
    <property type="match status" value="1"/>
</dbReference>
<dbReference type="Pfam" id="PF14828">
    <property type="entry name" value="Amnionless"/>
    <property type="match status" value="1"/>
</dbReference>
<name>AMNLS_MOUSE</name>